<proteinExistence type="evidence at protein level"/>
<comment type="function">
    <text evidence="1">Inhibits insect, but not mammalian, voltage-gated calcium channels (Cav).</text>
</comment>
<comment type="subcellular location">
    <subcellularLocation>
        <location evidence="3 4">Secreted</location>
    </subcellularLocation>
</comment>
<comment type="tissue specificity">
    <text evidence="7 8">Expressed by the venom gland.</text>
</comment>
<comment type="domain">
    <text evidence="6">The presence of a 'disulfide through disulfide knot' structurally defines this protein as a knottin.</text>
</comment>
<comment type="mass spectrometry" mass="3929.0" method="Plasma desorption" evidence="4"/>
<comment type="similarity">
    <text evidence="6">Belongs to the neurotoxin 08 (Shiva) family. 01 (omega toxin) subfamily.</text>
</comment>
<comment type="sequence caution" evidence="6">
    <conflict type="erroneous initiation">
        <sequence resource="EMBL-CDS" id="CDZ18898"/>
    </conflict>
    <text>Extended N-terminus.</text>
</comment>
<protein>
    <recommendedName>
        <fullName>Omega-hexatoxin-Hi1a</fullName>
        <shortName>Omega-HXTX-Hi1a</shortName>
    </recommendedName>
    <alternativeName>
        <fullName>Omega-atracotoxin-Hi1a</fullName>
        <shortName>AcTx-Hi1</shortName>
        <shortName>Omega-AcTx-Hi1a</shortName>
    </alternativeName>
    <alternativeName>
        <fullName evidence="5">SF9 peptide</fullName>
    </alternativeName>
</protein>
<feature type="signal peptide" evidence="2">
    <location>
        <begin position="1"/>
        <end position="22"/>
    </location>
</feature>
<feature type="propeptide" id="PRO_0000459662" evidence="7 8">
    <location>
        <begin position="23"/>
        <end position="42"/>
    </location>
</feature>
<feature type="peptide" id="PRO_0000280458" description="Omega-hexatoxin-Hi1a" evidence="4">
    <location>
        <begin position="43"/>
        <end position="78"/>
    </location>
</feature>
<feature type="site" description="Critical for insecticidal activity" evidence="1">
    <location>
        <position position="51"/>
    </location>
</feature>
<feature type="site" description="Critical for insecticidal activity" evidence="1">
    <location>
        <position position="68"/>
    </location>
</feature>
<feature type="site" description="Critical for insecticidal activity" evidence="1">
    <location>
        <position position="76"/>
    </location>
</feature>
<feature type="disulfide bond" evidence="1">
    <location>
        <begin position="45"/>
        <end position="59"/>
    </location>
</feature>
<feature type="disulfide bond" evidence="1">
    <location>
        <begin position="52"/>
        <end position="63"/>
    </location>
</feature>
<feature type="disulfide bond" evidence="1">
    <location>
        <begin position="58"/>
        <end position="77"/>
    </location>
</feature>
<name>TO1A_HADIN</name>
<evidence type="ECO:0000250" key="1">
    <source>
        <dbReference type="UniProtKB" id="P56207"/>
    </source>
</evidence>
<evidence type="ECO:0000255" key="2"/>
<evidence type="ECO:0000269" key="3">
    <source>
    </source>
</evidence>
<evidence type="ECO:0000269" key="4">
    <source ref="4"/>
</evidence>
<evidence type="ECO:0000303" key="5">
    <source>
    </source>
</evidence>
<evidence type="ECO:0000305" key="6"/>
<evidence type="ECO:0000305" key="7">
    <source>
    </source>
</evidence>
<evidence type="ECO:0000305" key="8">
    <source ref="4"/>
</evidence>
<evidence type="ECO:0000312" key="9">
    <source>
        <dbReference type="EMBL" id="CDZ18898.1"/>
    </source>
</evidence>
<dbReference type="EMBL" id="HACE01000114">
    <property type="protein sequence ID" value="CDZ18898.1"/>
    <property type="status" value="ALT_INIT"/>
    <property type="molecule type" value="Transcribed_RNA"/>
</dbReference>
<dbReference type="SMR" id="P0C2L5"/>
<dbReference type="ArachnoServer" id="AS000192">
    <property type="toxin name" value="omega-hexatoxin-Hi1a"/>
</dbReference>
<dbReference type="GO" id="GO:0005576">
    <property type="term" value="C:extracellular region"/>
    <property type="evidence" value="ECO:0007669"/>
    <property type="project" value="UniProtKB-SubCell"/>
</dbReference>
<dbReference type="GO" id="GO:0019855">
    <property type="term" value="F:calcium channel inhibitor activity"/>
    <property type="evidence" value="ECO:0007669"/>
    <property type="project" value="InterPro"/>
</dbReference>
<dbReference type="GO" id="GO:0090729">
    <property type="term" value="F:toxin activity"/>
    <property type="evidence" value="ECO:0007669"/>
    <property type="project" value="UniProtKB-KW"/>
</dbReference>
<dbReference type="GO" id="GO:0006952">
    <property type="term" value="P:defense response"/>
    <property type="evidence" value="ECO:0007669"/>
    <property type="project" value="InterPro"/>
</dbReference>
<dbReference type="InterPro" id="IPR009415">
    <property type="entry name" value="Omega-atracotox"/>
</dbReference>
<dbReference type="Pfam" id="PF06357">
    <property type="entry name" value="Omega-toxin"/>
    <property type="match status" value="1"/>
</dbReference>
<dbReference type="SUPFAM" id="SSF57059">
    <property type="entry name" value="omega toxin-like"/>
    <property type="match status" value="1"/>
</dbReference>
<sequence length="78" mass="8591">MNTATGFIVLLVLATVIGCISADFQGGFEPYEEEDAERIFRRSTCTPTDQPCPYHESCCSGSCTYKANENGNQVKRCD</sequence>
<organism>
    <name type="scientific">Hadronyche infensa</name>
    <name type="common">Fraser island funnel-web spider</name>
    <name type="synonym">Atrax infensus</name>
    <dbReference type="NCBI Taxonomy" id="153481"/>
    <lineage>
        <taxon>Eukaryota</taxon>
        <taxon>Metazoa</taxon>
        <taxon>Ecdysozoa</taxon>
        <taxon>Arthropoda</taxon>
        <taxon>Chelicerata</taxon>
        <taxon>Arachnida</taxon>
        <taxon>Araneae</taxon>
        <taxon>Mygalomorphae</taxon>
        <taxon>Hexathelidae</taxon>
        <taxon>Hadronyche</taxon>
    </lineage>
</organism>
<reference key="1">
    <citation type="journal article" date="2020" name="Proc. Natl. Acad. Sci. U.S.A.">
        <title>Structural venomics reveals evolution of a complex venom by duplication and diversification of an ancient peptide-encoding gene.</title>
        <authorList>
            <person name="Pineda S.S."/>
            <person name="Chin Y.K."/>
            <person name="Undheim E.A.B."/>
            <person name="Senff S."/>
            <person name="Mobli M."/>
            <person name="Dauly C."/>
            <person name="Escoubas P."/>
            <person name="Nicholson G.M."/>
            <person name="Kaas Q."/>
            <person name="Guo S."/>
            <person name="Herzig V."/>
            <person name="Mattick J.S."/>
            <person name="King G.F."/>
        </authorList>
    </citation>
    <scope>NUCLEOTIDE SEQUENCE [MRNA]</scope>
    <scope>IDENTIFICATION BY MASS SPECTROMETRY</scope>
    <scope>SUBCELLULAR LOCATION</scope>
    <source>
        <tissue>Venom</tissue>
        <tissue>Venom gland</tissue>
    </source>
</reference>
<reference evidence="9" key="2">
    <citation type="thesis" date="2012" institute="The University of Queensland" country="Australia">
        <title>Probing the chemical diversity of venom from the Australian Funnel-web spider Hadronyche infensa.</title>
        <authorList>
            <person name="Pineda S.S."/>
        </authorList>
    </citation>
    <scope>NUCLEOTIDE SEQUENCE [MRNA]</scope>
    <source>
        <tissue>Venom gland</tissue>
    </source>
</reference>
<reference evidence="9" key="3">
    <citation type="submission" date="2014-07" db="EMBL/GenBank/DDBJ databases">
        <authorList>
            <person name="Zhang J.E."/>
            <person name="Yang H."/>
            <person name="Guo J."/>
            <person name="Deng Z."/>
            <person name="Luo H."/>
            <person name="Luo M."/>
            <person name="Zhao B."/>
        </authorList>
    </citation>
    <scope>NUCLEOTIDE SEQUENCE [MRNA]</scope>
    <source>
        <tissue>Venom gland</tissue>
    </source>
</reference>
<reference key="4">
    <citation type="patent" date="1998-06-09" number="US5763568">
        <title>Insecticidal toxins derived from funnel web (Atrax or Hadronyche) spiders.</title>
        <authorList>
            <person name="Atkinson R.K."/>
            <person name="Howden M.E.H."/>
            <person name="Tyler M.I."/>
            <person name="Vonarx E.J."/>
        </authorList>
    </citation>
    <scope>PROTEIN SEQUENCE OF 43-78</scope>
    <scope>MASS SPECTROMETRY</scope>
    <scope>SUBCELLULAR LOCATION</scope>
</reference>
<accession>P0C2L5</accession>
<accession>A0A1D0BNE8</accession>
<keyword id="KW-0108">Calcium channel impairing toxin</keyword>
<keyword id="KW-0165">Cleavage on pair of basic residues</keyword>
<keyword id="KW-0903">Direct protein sequencing</keyword>
<keyword id="KW-1015">Disulfide bond</keyword>
<keyword id="KW-0872">Ion channel impairing toxin</keyword>
<keyword id="KW-0960">Knottin</keyword>
<keyword id="KW-0528">Neurotoxin</keyword>
<keyword id="KW-0964">Secreted</keyword>
<keyword id="KW-0732">Signal</keyword>
<keyword id="KW-0800">Toxin</keyword>
<keyword id="KW-1218">Voltage-gated calcium channel impairing toxin</keyword>